<reference key="1">
    <citation type="journal article" date="2006" name="J. Bacteriol.">
        <title>Comparison of the genome sequence of the poultry pathogen Bordetella avium with those of B. bronchiseptica, B. pertussis, and B. parapertussis reveals extensive diversity in surface structures associated with host interaction.</title>
        <authorList>
            <person name="Sebaihia M."/>
            <person name="Preston A."/>
            <person name="Maskell D.J."/>
            <person name="Kuzmiak H."/>
            <person name="Connell T.D."/>
            <person name="King N.D."/>
            <person name="Orndorff P.E."/>
            <person name="Miyamoto D.M."/>
            <person name="Thomson N.R."/>
            <person name="Harris D."/>
            <person name="Goble A."/>
            <person name="Lord A."/>
            <person name="Murphy L."/>
            <person name="Quail M.A."/>
            <person name="Rutter S."/>
            <person name="Squares R."/>
            <person name="Squares S."/>
            <person name="Woodward J."/>
            <person name="Parkhill J."/>
            <person name="Temple L.M."/>
        </authorList>
    </citation>
    <scope>NUCLEOTIDE SEQUENCE [LARGE SCALE GENOMIC DNA]</scope>
    <source>
        <strain>197N</strain>
    </source>
</reference>
<name>UPPP_BORA1</name>
<protein>
    <recommendedName>
        <fullName evidence="1">Undecaprenyl-diphosphatase</fullName>
        <ecNumber evidence="1">3.6.1.27</ecNumber>
    </recommendedName>
    <alternativeName>
        <fullName evidence="1">Bacitracin resistance protein</fullName>
    </alternativeName>
    <alternativeName>
        <fullName evidence="1">Undecaprenyl pyrophosphate phosphatase</fullName>
    </alternativeName>
</protein>
<gene>
    <name evidence="1" type="primary">uppP</name>
    <name type="synonym">bacA</name>
    <name type="ordered locus">BAV2566</name>
</gene>
<accession>Q2KX31</accession>
<comment type="function">
    <text evidence="1">Catalyzes the dephosphorylation of undecaprenyl diphosphate (UPP). Confers resistance to bacitracin.</text>
</comment>
<comment type="catalytic activity">
    <reaction evidence="1">
        <text>di-trans,octa-cis-undecaprenyl diphosphate + H2O = di-trans,octa-cis-undecaprenyl phosphate + phosphate + H(+)</text>
        <dbReference type="Rhea" id="RHEA:28094"/>
        <dbReference type="ChEBI" id="CHEBI:15377"/>
        <dbReference type="ChEBI" id="CHEBI:15378"/>
        <dbReference type="ChEBI" id="CHEBI:43474"/>
        <dbReference type="ChEBI" id="CHEBI:58405"/>
        <dbReference type="ChEBI" id="CHEBI:60392"/>
        <dbReference type="EC" id="3.6.1.27"/>
    </reaction>
</comment>
<comment type="subcellular location">
    <subcellularLocation>
        <location evidence="1">Cell inner membrane</location>
        <topology evidence="1">Multi-pass membrane protein</topology>
    </subcellularLocation>
</comment>
<comment type="miscellaneous">
    <text>Bacitracin is thought to be involved in the inhibition of peptidoglycan synthesis by sequestering undecaprenyl diphosphate, thereby reducing the pool of lipid carrier available.</text>
</comment>
<comment type="similarity">
    <text evidence="1">Belongs to the UppP family.</text>
</comment>
<sequence length="282" mass="30791">MTDSTLYFVKAFFLGIIEGLTEFIPVSSTGHLILFGDWINFESGSGKVFEVVIQLGAILAVMWIFRARLWQLIRGTLSGQRQEMLFTRNLLLAFFPAAIIGAIFIKAIKQTFYHPGVVAVTLVLGGLIMLWVERRAPRSDGSASETATEERATAHSLEEISWKQALGVGVAQCLAMIPGTSRSGATIIGGMVAGIQRKTATEFSFFLAMPTMLGAAVYDMYRNIDLLTSHDLGAIAVGFVAAFLSALLVVRAVLRFVANHTYRGFAWYRIALGVVVAAWLAF</sequence>
<dbReference type="EC" id="3.6.1.27" evidence="1"/>
<dbReference type="EMBL" id="AM167904">
    <property type="protein sequence ID" value="CAJ50176.1"/>
    <property type="status" value="ALT_SEQ"/>
    <property type="molecule type" value="Genomic_DNA"/>
</dbReference>
<dbReference type="RefSeq" id="WP_039051714.1">
    <property type="nucleotide sequence ID" value="NC_010645.1"/>
</dbReference>
<dbReference type="SMR" id="Q2KX31"/>
<dbReference type="STRING" id="360910.BAV2566"/>
<dbReference type="GeneID" id="92934249"/>
<dbReference type="KEGG" id="bav:BAV2566"/>
<dbReference type="eggNOG" id="COG1968">
    <property type="taxonomic scope" value="Bacteria"/>
</dbReference>
<dbReference type="HOGENOM" id="CLU_060296_2_0_4"/>
<dbReference type="OrthoDB" id="9808289at2"/>
<dbReference type="Proteomes" id="UP000001977">
    <property type="component" value="Chromosome"/>
</dbReference>
<dbReference type="GO" id="GO:0005886">
    <property type="term" value="C:plasma membrane"/>
    <property type="evidence" value="ECO:0007669"/>
    <property type="project" value="UniProtKB-SubCell"/>
</dbReference>
<dbReference type="GO" id="GO:0050380">
    <property type="term" value="F:undecaprenyl-diphosphatase activity"/>
    <property type="evidence" value="ECO:0007669"/>
    <property type="project" value="UniProtKB-UniRule"/>
</dbReference>
<dbReference type="GO" id="GO:0071555">
    <property type="term" value="P:cell wall organization"/>
    <property type="evidence" value="ECO:0007669"/>
    <property type="project" value="UniProtKB-KW"/>
</dbReference>
<dbReference type="GO" id="GO:0009252">
    <property type="term" value="P:peptidoglycan biosynthetic process"/>
    <property type="evidence" value="ECO:0007669"/>
    <property type="project" value="UniProtKB-KW"/>
</dbReference>
<dbReference type="GO" id="GO:0008360">
    <property type="term" value="P:regulation of cell shape"/>
    <property type="evidence" value="ECO:0007669"/>
    <property type="project" value="UniProtKB-KW"/>
</dbReference>
<dbReference type="GO" id="GO:0046677">
    <property type="term" value="P:response to antibiotic"/>
    <property type="evidence" value="ECO:0007669"/>
    <property type="project" value="UniProtKB-UniRule"/>
</dbReference>
<dbReference type="HAMAP" id="MF_01006">
    <property type="entry name" value="Undec_diphosphatase"/>
    <property type="match status" value="1"/>
</dbReference>
<dbReference type="InterPro" id="IPR003824">
    <property type="entry name" value="UppP"/>
</dbReference>
<dbReference type="NCBIfam" id="NF001389">
    <property type="entry name" value="PRK00281.1-2"/>
    <property type="match status" value="1"/>
</dbReference>
<dbReference type="NCBIfam" id="NF001390">
    <property type="entry name" value="PRK00281.1-4"/>
    <property type="match status" value="1"/>
</dbReference>
<dbReference type="NCBIfam" id="TIGR00753">
    <property type="entry name" value="undec_PP_bacA"/>
    <property type="match status" value="1"/>
</dbReference>
<dbReference type="PANTHER" id="PTHR30622">
    <property type="entry name" value="UNDECAPRENYL-DIPHOSPHATASE"/>
    <property type="match status" value="1"/>
</dbReference>
<dbReference type="PANTHER" id="PTHR30622:SF3">
    <property type="entry name" value="UNDECAPRENYL-DIPHOSPHATASE"/>
    <property type="match status" value="1"/>
</dbReference>
<dbReference type="Pfam" id="PF02673">
    <property type="entry name" value="BacA"/>
    <property type="match status" value="1"/>
</dbReference>
<organism>
    <name type="scientific">Bordetella avium (strain 197N)</name>
    <dbReference type="NCBI Taxonomy" id="360910"/>
    <lineage>
        <taxon>Bacteria</taxon>
        <taxon>Pseudomonadati</taxon>
        <taxon>Pseudomonadota</taxon>
        <taxon>Betaproteobacteria</taxon>
        <taxon>Burkholderiales</taxon>
        <taxon>Alcaligenaceae</taxon>
        <taxon>Bordetella</taxon>
    </lineage>
</organism>
<feature type="chain" id="PRO_0000290689" description="Undecaprenyl-diphosphatase">
    <location>
        <begin position="1"/>
        <end position="282"/>
    </location>
</feature>
<feature type="transmembrane region" description="Helical" evidence="1">
    <location>
        <begin position="6"/>
        <end position="26"/>
    </location>
</feature>
<feature type="transmembrane region" description="Helical" evidence="1">
    <location>
        <begin position="45"/>
        <end position="65"/>
    </location>
</feature>
<feature type="transmembrane region" description="Helical" evidence="1">
    <location>
        <begin position="85"/>
        <end position="105"/>
    </location>
</feature>
<feature type="transmembrane region" description="Helical" evidence="1">
    <location>
        <begin position="112"/>
        <end position="132"/>
    </location>
</feature>
<feature type="transmembrane region" description="Helical" evidence="1">
    <location>
        <begin position="200"/>
        <end position="220"/>
    </location>
</feature>
<feature type="transmembrane region" description="Helical" evidence="1">
    <location>
        <begin position="230"/>
        <end position="250"/>
    </location>
</feature>
<feature type="transmembrane region" description="Helical" evidence="1">
    <location>
        <begin position="262"/>
        <end position="282"/>
    </location>
</feature>
<proteinExistence type="inferred from homology"/>
<keyword id="KW-0046">Antibiotic resistance</keyword>
<keyword id="KW-0997">Cell inner membrane</keyword>
<keyword id="KW-1003">Cell membrane</keyword>
<keyword id="KW-0133">Cell shape</keyword>
<keyword id="KW-0961">Cell wall biogenesis/degradation</keyword>
<keyword id="KW-0378">Hydrolase</keyword>
<keyword id="KW-0472">Membrane</keyword>
<keyword id="KW-0573">Peptidoglycan synthesis</keyword>
<keyword id="KW-1185">Reference proteome</keyword>
<keyword id="KW-0812">Transmembrane</keyword>
<keyword id="KW-1133">Transmembrane helix</keyword>
<evidence type="ECO:0000255" key="1">
    <source>
        <dbReference type="HAMAP-Rule" id="MF_01006"/>
    </source>
</evidence>